<feature type="chain" id="PRO_0000318432" description="Protein translocase subunit SecA 2">
    <location>
        <begin position="1"/>
        <end position="796"/>
    </location>
</feature>
<feature type="binding site" evidence="1">
    <location>
        <position position="84"/>
    </location>
    <ligand>
        <name>ATP</name>
        <dbReference type="ChEBI" id="CHEBI:30616"/>
    </ligand>
</feature>
<feature type="binding site" evidence="1">
    <location>
        <begin position="102"/>
        <end position="106"/>
    </location>
    <ligand>
        <name>ATP</name>
        <dbReference type="ChEBI" id="CHEBI:30616"/>
    </ligand>
</feature>
<feature type="binding site" evidence="1">
    <location>
        <position position="496"/>
    </location>
    <ligand>
        <name>ATP</name>
        <dbReference type="ChEBI" id="CHEBI:30616"/>
    </ligand>
</feature>
<protein>
    <recommendedName>
        <fullName evidence="1">Protein translocase subunit SecA 2</fullName>
        <ecNumber evidence="1">7.4.2.8</ecNumber>
    </recommendedName>
</protein>
<name>SECA2_STAES</name>
<gene>
    <name evidence="1" type="primary">secA2</name>
    <name type="ordered locus">SE_2244</name>
</gene>
<comment type="function">
    <text evidence="1">Part of the Sec protein translocase complex. Interacts with the SecYEG preprotein conducting channel. Has a central role in coupling the hydrolysis of ATP to the transfer of proteins into and across the cell membrane, serving as an ATP-driven molecular motor driving the stepwise translocation of polypeptide chains across the membrane.</text>
</comment>
<comment type="catalytic activity">
    <reaction evidence="1">
        <text>ATP + H2O + cellular proteinSide 1 = ADP + phosphate + cellular proteinSide 2.</text>
        <dbReference type="EC" id="7.4.2.8"/>
    </reaction>
</comment>
<comment type="subunit">
    <text evidence="1">Monomer and homodimer. Part of the essential Sec protein translocation apparatus which comprises SecA, SecYEG and auxiliary proteins SecDF. Other proteins may also be involved.</text>
</comment>
<comment type="subcellular location">
    <subcellularLocation>
        <location evidence="1">Cell membrane</location>
        <topology evidence="1">Peripheral membrane protein</topology>
        <orientation evidence="1">Cytoplasmic side</orientation>
    </subcellularLocation>
    <subcellularLocation>
        <location evidence="1">Cytoplasm</location>
    </subcellularLocation>
    <text evidence="1">Distribution is 50-50.</text>
</comment>
<comment type="similarity">
    <text evidence="1">Belongs to the SecA family.</text>
</comment>
<sequence>MAKGVNQIINNIRLRKLRKILNQINALSEEFSNFSDEALQAKTKEFKVYLNDNKASLNHILPQAYATVREASKRVLGMYPKDVQILGAIAMHQGNIAEMQTGEGKTLTATMPLYLNALTGKGAYLITTNDYLAKRDFLEMKPLYEWLGLSVSLGFVDIPEYEYAENEKYELYHHDIVYTTNGRLGFDYLIDNLADDIRAKFLPKLNFAIIDEVDSIILDAAQTPLVISGAPRVQSNLFHIVKKFVETLEKDKDFIVNFNKKEVWLTDEGSEKASHYFKVNSIYQQQYFDLVRMIHLSLRAKYLFKYNLDYFIFDGEIVLIDRITGRMLPGTKLQSGLHQAIEALENVEISQDMSVMATITFQNLFKQFDEFSGMTGTGKLGEKEFFDLYSKVVIEIPTHSPIERDDRPDRVFANGDKKNDAILKTVIGIHETQQPVLLITRTAEAAEYFSAELFKRDIPNNLLIAQNVAKEAQMIAEAGQLSAVTVATSMAGRGTDIKLSKEVHDIGGLAVIINEHMDNSRVDRQLRGRSGRQGDPGYSQIFVSLDDDLVKRWSNSNLAENKNLQTMDASKLESSALFKKRVKSIVNKAQRVSEETAMKNREMANEFEKSISVQRDKIYAERNHILEASDFDDFNFEQLARDVFTKDVKNLDLSSERALVNYIYENLSFVFDEDVSNINMQNDEEIIQFLIQQFTQQFNNRLEVAADSYLKLRFIQKSILKAIDSEWIEQVDNLQQLKASVNNRQNGQRNVIFEYHKVALETYEYMSEDIKRKMVRNLCLSILAFDKDGDMVIHFP</sequence>
<proteinExistence type="inferred from homology"/>
<evidence type="ECO:0000255" key="1">
    <source>
        <dbReference type="HAMAP-Rule" id="MF_01382"/>
    </source>
</evidence>
<dbReference type="EC" id="7.4.2.8" evidence="1"/>
<dbReference type="EMBL" id="AE015929">
    <property type="protein sequence ID" value="AAO05886.1"/>
    <property type="molecule type" value="Genomic_DNA"/>
</dbReference>
<dbReference type="RefSeq" id="NP_765799.1">
    <property type="nucleotide sequence ID" value="NC_004461.1"/>
</dbReference>
<dbReference type="RefSeq" id="WP_002485917.1">
    <property type="nucleotide sequence ID" value="NZ_WBME01000055.1"/>
</dbReference>
<dbReference type="SMR" id="Q8CMU9"/>
<dbReference type="GeneID" id="50017689"/>
<dbReference type="KEGG" id="sep:SE_2244"/>
<dbReference type="PATRIC" id="fig|176280.10.peg.2191"/>
<dbReference type="eggNOG" id="COG0653">
    <property type="taxonomic scope" value="Bacteria"/>
</dbReference>
<dbReference type="HOGENOM" id="CLU_005314_3_2_9"/>
<dbReference type="OrthoDB" id="9762243at2"/>
<dbReference type="Proteomes" id="UP000001411">
    <property type="component" value="Chromosome"/>
</dbReference>
<dbReference type="GO" id="GO:0031522">
    <property type="term" value="C:cell envelope Sec protein transport complex"/>
    <property type="evidence" value="ECO:0007669"/>
    <property type="project" value="TreeGrafter"/>
</dbReference>
<dbReference type="GO" id="GO:0005829">
    <property type="term" value="C:cytosol"/>
    <property type="evidence" value="ECO:0007669"/>
    <property type="project" value="TreeGrafter"/>
</dbReference>
<dbReference type="GO" id="GO:0005886">
    <property type="term" value="C:plasma membrane"/>
    <property type="evidence" value="ECO:0007669"/>
    <property type="project" value="UniProtKB-SubCell"/>
</dbReference>
<dbReference type="GO" id="GO:0005524">
    <property type="term" value="F:ATP binding"/>
    <property type="evidence" value="ECO:0007669"/>
    <property type="project" value="UniProtKB-UniRule"/>
</dbReference>
<dbReference type="GO" id="GO:0008564">
    <property type="term" value="F:protein-exporting ATPase activity"/>
    <property type="evidence" value="ECO:0007669"/>
    <property type="project" value="UniProtKB-EC"/>
</dbReference>
<dbReference type="GO" id="GO:0065002">
    <property type="term" value="P:intracellular protein transmembrane transport"/>
    <property type="evidence" value="ECO:0007669"/>
    <property type="project" value="UniProtKB-UniRule"/>
</dbReference>
<dbReference type="GO" id="GO:0017038">
    <property type="term" value="P:protein import"/>
    <property type="evidence" value="ECO:0007669"/>
    <property type="project" value="InterPro"/>
</dbReference>
<dbReference type="GO" id="GO:0006605">
    <property type="term" value="P:protein targeting"/>
    <property type="evidence" value="ECO:0007669"/>
    <property type="project" value="UniProtKB-UniRule"/>
</dbReference>
<dbReference type="GO" id="GO:0043952">
    <property type="term" value="P:protein transport by the Sec complex"/>
    <property type="evidence" value="ECO:0007669"/>
    <property type="project" value="TreeGrafter"/>
</dbReference>
<dbReference type="CDD" id="cd17928">
    <property type="entry name" value="DEXDc_SecA"/>
    <property type="match status" value="1"/>
</dbReference>
<dbReference type="CDD" id="cd18803">
    <property type="entry name" value="SF2_C_secA"/>
    <property type="match status" value="1"/>
</dbReference>
<dbReference type="FunFam" id="3.40.50.300:FF:000429">
    <property type="entry name" value="Preprotein translocase subunit SecA"/>
    <property type="match status" value="1"/>
</dbReference>
<dbReference type="Gene3D" id="1.10.3060.10">
    <property type="entry name" value="Helical scaffold and wing domains of SecA"/>
    <property type="match status" value="1"/>
</dbReference>
<dbReference type="Gene3D" id="3.40.50.300">
    <property type="entry name" value="P-loop containing nucleotide triphosphate hydrolases"/>
    <property type="match status" value="2"/>
</dbReference>
<dbReference type="Gene3D" id="3.90.1440.10">
    <property type="entry name" value="SecA, preprotein cross-linking domain"/>
    <property type="match status" value="1"/>
</dbReference>
<dbReference type="HAMAP" id="MF_01382">
    <property type="entry name" value="SecA"/>
    <property type="match status" value="1"/>
</dbReference>
<dbReference type="InterPro" id="IPR014001">
    <property type="entry name" value="Helicase_ATP-bd"/>
</dbReference>
<dbReference type="InterPro" id="IPR001650">
    <property type="entry name" value="Helicase_C-like"/>
</dbReference>
<dbReference type="InterPro" id="IPR027417">
    <property type="entry name" value="P-loop_NTPase"/>
</dbReference>
<dbReference type="InterPro" id="IPR000185">
    <property type="entry name" value="SecA"/>
</dbReference>
<dbReference type="InterPro" id="IPR022490">
    <property type="entry name" value="SecA2"/>
</dbReference>
<dbReference type="InterPro" id="IPR011115">
    <property type="entry name" value="SecA_DEAD"/>
</dbReference>
<dbReference type="InterPro" id="IPR014018">
    <property type="entry name" value="SecA_motor_DEAD"/>
</dbReference>
<dbReference type="InterPro" id="IPR011130">
    <property type="entry name" value="SecA_preprotein_X-link_dom"/>
</dbReference>
<dbReference type="InterPro" id="IPR044722">
    <property type="entry name" value="SecA_SF2_C"/>
</dbReference>
<dbReference type="InterPro" id="IPR011116">
    <property type="entry name" value="SecA_Wing/Scaffold"/>
</dbReference>
<dbReference type="InterPro" id="IPR036266">
    <property type="entry name" value="SecA_Wing/Scaffold_sf"/>
</dbReference>
<dbReference type="InterPro" id="IPR036670">
    <property type="entry name" value="SecA_X-link_sf"/>
</dbReference>
<dbReference type="NCBIfam" id="NF006630">
    <property type="entry name" value="PRK09200.1"/>
    <property type="match status" value="1"/>
</dbReference>
<dbReference type="NCBIfam" id="TIGR03714">
    <property type="entry name" value="secA2"/>
    <property type="match status" value="1"/>
</dbReference>
<dbReference type="PANTHER" id="PTHR30612:SF0">
    <property type="entry name" value="CHLOROPLAST PROTEIN-TRANSPORTING ATPASE"/>
    <property type="match status" value="1"/>
</dbReference>
<dbReference type="PANTHER" id="PTHR30612">
    <property type="entry name" value="SECA INNER MEMBRANE COMPONENT OF SEC PROTEIN SECRETION SYSTEM"/>
    <property type="match status" value="1"/>
</dbReference>
<dbReference type="Pfam" id="PF21090">
    <property type="entry name" value="P-loop_SecA"/>
    <property type="match status" value="1"/>
</dbReference>
<dbReference type="Pfam" id="PF07517">
    <property type="entry name" value="SecA_DEAD"/>
    <property type="match status" value="1"/>
</dbReference>
<dbReference type="Pfam" id="PF01043">
    <property type="entry name" value="SecA_PP_bind"/>
    <property type="match status" value="1"/>
</dbReference>
<dbReference type="Pfam" id="PF07516">
    <property type="entry name" value="SecA_SW"/>
    <property type="match status" value="1"/>
</dbReference>
<dbReference type="PRINTS" id="PR00906">
    <property type="entry name" value="SECA"/>
</dbReference>
<dbReference type="SMART" id="SM00957">
    <property type="entry name" value="SecA_DEAD"/>
    <property type="match status" value="1"/>
</dbReference>
<dbReference type="SMART" id="SM00958">
    <property type="entry name" value="SecA_PP_bind"/>
    <property type="match status" value="1"/>
</dbReference>
<dbReference type="SUPFAM" id="SSF81886">
    <property type="entry name" value="Helical scaffold and wing domains of SecA"/>
    <property type="match status" value="1"/>
</dbReference>
<dbReference type="SUPFAM" id="SSF52540">
    <property type="entry name" value="P-loop containing nucleoside triphosphate hydrolases"/>
    <property type="match status" value="2"/>
</dbReference>
<dbReference type="SUPFAM" id="SSF81767">
    <property type="entry name" value="Pre-protein crosslinking domain of SecA"/>
    <property type="match status" value="1"/>
</dbReference>
<dbReference type="PROSITE" id="PS51196">
    <property type="entry name" value="SECA_MOTOR_DEAD"/>
    <property type="match status" value="1"/>
</dbReference>
<organism>
    <name type="scientific">Staphylococcus epidermidis (strain ATCC 12228 / FDA PCI 1200)</name>
    <dbReference type="NCBI Taxonomy" id="176280"/>
    <lineage>
        <taxon>Bacteria</taxon>
        <taxon>Bacillati</taxon>
        <taxon>Bacillota</taxon>
        <taxon>Bacilli</taxon>
        <taxon>Bacillales</taxon>
        <taxon>Staphylococcaceae</taxon>
        <taxon>Staphylococcus</taxon>
    </lineage>
</organism>
<accession>Q8CMU9</accession>
<keyword id="KW-0067">ATP-binding</keyword>
<keyword id="KW-1003">Cell membrane</keyword>
<keyword id="KW-0963">Cytoplasm</keyword>
<keyword id="KW-0472">Membrane</keyword>
<keyword id="KW-0547">Nucleotide-binding</keyword>
<keyword id="KW-0653">Protein transport</keyword>
<keyword id="KW-1278">Translocase</keyword>
<keyword id="KW-0811">Translocation</keyword>
<keyword id="KW-0813">Transport</keyword>
<reference key="1">
    <citation type="journal article" date="2003" name="Mol. Microbiol.">
        <title>Genome-based analysis of virulence genes in a non-biofilm-forming Staphylococcus epidermidis strain (ATCC 12228).</title>
        <authorList>
            <person name="Zhang Y.-Q."/>
            <person name="Ren S.-X."/>
            <person name="Li H.-L."/>
            <person name="Wang Y.-X."/>
            <person name="Fu G."/>
            <person name="Yang J."/>
            <person name="Qin Z.-Q."/>
            <person name="Miao Y.-G."/>
            <person name="Wang W.-Y."/>
            <person name="Chen R.-S."/>
            <person name="Shen Y."/>
            <person name="Chen Z."/>
            <person name="Yuan Z.-H."/>
            <person name="Zhao G.-P."/>
            <person name="Qu D."/>
            <person name="Danchin A."/>
            <person name="Wen Y.-M."/>
        </authorList>
    </citation>
    <scope>NUCLEOTIDE SEQUENCE [LARGE SCALE GENOMIC DNA]</scope>
    <source>
        <strain>ATCC 12228 / FDA PCI 1200</strain>
    </source>
</reference>